<gene>
    <name evidence="1" type="primary">fabH</name>
    <name type="ordered locus">Maqu_1374</name>
</gene>
<dbReference type="EC" id="2.3.1.180" evidence="1"/>
<dbReference type="EMBL" id="CP000514">
    <property type="protein sequence ID" value="ABM18462.1"/>
    <property type="molecule type" value="Genomic_DNA"/>
</dbReference>
<dbReference type="RefSeq" id="WP_011784866.1">
    <property type="nucleotide sequence ID" value="NC_008740.1"/>
</dbReference>
<dbReference type="SMR" id="A1U0E3"/>
<dbReference type="STRING" id="351348.Maqu_1374"/>
<dbReference type="KEGG" id="maq:Maqu_1374"/>
<dbReference type="eggNOG" id="COG0332">
    <property type="taxonomic scope" value="Bacteria"/>
</dbReference>
<dbReference type="HOGENOM" id="CLU_039592_3_1_6"/>
<dbReference type="OrthoDB" id="9815506at2"/>
<dbReference type="UniPathway" id="UPA00094"/>
<dbReference type="Proteomes" id="UP000000998">
    <property type="component" value="Chromosome"/>
</dbReference>
<dbReference type="GO" id="GO:0005737">
    <property type="term" value="C:cytoplasm"/>
    <property type="evidence" value="ECO:0007669"/>
    <property type="project" value="UniProtKB-SubCell"/>
</dbReference>
<dbReference type="GO" id="GO:0004315">
    <property type="term" value="F:3-oxoacyl-[acyl-carrier-protein] synthase activity"/>
    <property type="evidence" value="ECO:0007669"/>
    <property type="project" value="InterPro"/>
</dbReference>
<dbReference type="GO" id="GO:0033818">
    <property type="term" value="F:beta-ketoacyl-acyl-carrier-protein synthase III activity"/>
    <property type="evidence" value="ECO:0007669"/>
    <property type="project" value="UniProtKB-UniRule"/>
</dbReference>
<dbReference type="GO" id="GO:0006633">
    <property type="term" value="P:fatty acid biosynthetic process"/>
    <property type="evidence" value="ECO:0007669"/>
    <property type="project" value="UniProtKB-UniRule"/>
</dbReference>
<dbReference type="CDD" id="cd00830">
    <property type="entry name" value="KAS_III"/>
    <property type="match status" value="1"/>
</dbReference>
<dbReference type="FunFam" id="3.40.47.10:FF:000004">
    <property type="entry name" value="3-oxoacyl-[acyl-carrier-protein] synthase 3"/>
    <property type="match status" value="1"/>
</dbReference>
<dbReference type="Gene3D" id="3.40.47.10">
    <property type="match status" value="1"/>
</dbReference>
<dbReference type="HAMAP" id="MF_01815">
    <property type="entry name" value="FabH"/>
    <property type="match status" value="1"/>
</dbReference>
<dbReference type="InterPro" id="IPR013747">
    <property type="entry name" value="ACP_syn_III_C"/>
</dbReference>
<dbReference type="InterPro" id="IPR013751">
    <property type="entry name" value="ACP_syn_III_N"/>
</dbReference>
<dbReference type="InterPro" id="IPR004655">
    <property type="entry name" value="FabH"/>
</dbReference>
<dbReference type="InterPro" id="IPR016039">
    <property type="entry name" value="Thiolase-like"/>
</dbReference>
<dbReference type="NCBIfam" id="TIGR00747">
    <property type="entry name" value="fabH"/>
    <property type="match status" value="1"/>
</dbReference>
<dbReference type="NCBIfam" id="NF006829">
    <property type="entry name" value="PRK09352.1"/>
    <property type="match status" value="1"/>
</dbReference>
<dbReference type="PANTHER" id="PTHR43091">
    <property type="entry name" value="3-OXOACYL-[ACYL-CARRIER-PROTEIN] SYNTHASE"/>
    <property type="match status" value="1"/>
</dbReference>
<dbReference type="PANTHER" id="PTHR43091:SF1">
    <property type="entry name" value="BETA-KETOACYL-[ACYL-CARRIER-PROTEIN] SYNTHASE III, CHLOROPLASTIC"/>
    <property type="match status" value="1"/>
</dbReference>
<dbReference type="Pfam" id="PF08545">
    <property type="entry name" value="ACP_syn_III"/>
    <property type="match status" value="1"/>
</dbReference>
<dbReference type="Pfam" id="PF08541">
    <property type="entry name" value="ACP_syn_III_C"/>
    <property type="match status" value="1"/>
</dbReference>
<dbReference type="SUPFAM" id="SSF53901">
    <property type="entry name" value="Thiolase-like"/>
    <property type="match status" value="1"/>
</dbReference>
<protein>
    <recommendedName>
        <fullName evidence="1">Beta-ketoacyl-[acyl-carrier-protein] synthase III</fullName>
        <shortName evidence="1">Beta-ketoacyl-ACP synthase III</shortName>
        <shortName evidence="1">KAS III</shortName>
        <ecNumber evidence="1">2.3.1.180</ecNumber>
    </recommendedName>
    <alternativeName>
        <fullName evidence="1">3-oxoacyl-[acyl-carrier-protein] synthase 3</fullName>
    </alternativeName>
    <alternativeName>
        <fullName evidence="1">3-oxoacyl-[acyl-carrier-protein] synthase III</fullName>
    </alternativeName>
</protein>
<evidence type="ECO:0000255" key="1">
    <source>
        <dbReference type="HAMAP-Rule" id="MF_01815"/>
    </source>
</evidence>
<proteinExistence type="inferred from homology"/>
<accession>A1U0E3</accession>
<organism>
    <name type="scientific">Marinobacter nauticus (strain ATCC 700491 / DSM 11845 / VT8)</name>
    <name type="common">Marinobacter aquaeolei</name>
    <dbReference type="NCBI Taxonomy" id="351348"/>
    <lineage>
        <taxon>Bacteria</taxon>
        <taxon>Pseudomonadati</taxon>
        <taxon>Pseudomonadota</taxon>
        <taxon>Gammaproteobacteria</taxon>
        <taxon>Pseudomonadales</taxon>
        <taxon>Marinobacteraceae</taxon>
        <taxon>Marinobacter</taxon>
    </lineage>
</organism>
<feature type="chain" id="PRO_1000056376" description="Beta-ketoacyl-[acyl-carrier-protein] synthase III">
    <location>
        <begin position="1"/>
        <end position="322"/>
    </location>
</feature>
<feature type="region of interest" description="ACP-binding" evidence="1">
    <location>
        <begin position="250"/>
        <end position="254"/>
    </location>
</feature>
<feature type="active site" evidence="1">
    <location>
        <position position="113"/>
    </location>
</feature>
<feature type="active site" evidence="1">
    <location>
        <position position="249"/>
    </location>
</feature>
<feature type="active site" evidence="1">
    <location>
        <position position="279"/>
    </location>
</feature>
<name>FABH_MARN8</name>
<keyword id="KW-0012">Acyltransferase</keyword>
<keyword id="KW-0963">Cytoplasm</keyword>
<keyword id="KW-0275">Fatty acid biosynthesis</keyword>
<keyword id="KW-0276">Fatty acid metabolism</keyword>
<keyword id="KW-0444">Lipid biosynthesis</keyword>
<keyword id="KW-0443">Lipid metabolism</keyword>
<keyword id="KW-0511">Multifunctional enzyme</keyword>
<keyword id="KW-0808">Transferase</keyword>
<comment type="function">
    <text evidence="1">Catalyzes the condensation reaction of fatty acid synthesis by the addition to an acyl acceptor of two carbons from malonyl-ACP. Catalyzes the first condensation reaction which initiates fatty acid synthesis and may therefore play a role in governing the total rate of fatty acid production. Possesses both acetoacetyl-ACP synthase and acetyl transacylase activities. Its substrate specificity determines the biosynthesis of branched-chain and/or straight-chain of fatty acids.</text>
</comment>
<comment type="catalytic activity">
    <reaction evidence="1">
        <text>malonyl-[ACP] + acetyl-CoA + H(+) = 3-oxobutanoyl-[ACP] + CO2 + CoA</text>
        <dbReference type="Rhea" id="RHEA:12080"/>
        <dbReference type="Rhea" id="RHEA-COMP:9623"/>
        <dbReference type="Rhea" id="RHEA-COMP:9625"/>
        <dbReference type="ChEBI" id="CHEBI:15378"/>
        <dbReference type="ChEBI" id="CHEBI:16526"/>
        <dbReference type="ChEBI" id="CHEBI:57287"/>
        <dbReference type="ChEBI" id="CHEBI:57288"/>
        <dbReference type="ChEBI" id="CHEBI:78449"/>
        <dbReference type="ChEBI" id="CHEBI:78450"/>
        <dbReference type="EC" id="2.3.1.180"/>
    </reaction>
</comment>
<comment type="pathway">
    <text evidence="1">Lipid metabolism; fatty acid biosynthesis.</text>
</comment>
<comment type="subunit">
    <text evidence="1">Homodimer.</text>
</comment>
<comment type="subcellular location">
    <subcellularLocation>
        <location evidence="1">Cytoplasm</location>
    </subcellularLocation>
</comment>
<comment type="domain">
    <text evidence="1">The last Arg residue of the ACP-binding site is essential for the weak association between ACP/AcpP and FabH.</text>
</comment>
<comment type="similarity">
    <text evidence="1">Belongs to the thiolase-like superfamily. FabH family.</text>
</comment>
<reference key="1">
    <citation type="journal article" date="2011" name="Appl. Environ. Microbiol.">
        <title>Genomic potential of Marinobacter aquaeolei, a biogeochemical 'opportunitroph'.</title>
        <authorList>
            <person name="Singer E."/>
            <person name="Webb E.A."/>
            <person name="Nelson W.C."/>
            <person name="Heidelberg J.F."/>
            <person name="Ivanova N."/>
            <person name="Pati A."/>
            <person name="Edwards K.J."/>
        </authorList>
    </citation>
    <scope>NUCLEOTIDE SEQUENCE [LARGE SCALE GENOMIC DNA]</scope>
    <source>
        <strain>ATCC 700491 / DSM 11845 / VT8</strain>
    </source>
</reference>
<sequence>MTFARIAGTGSYLPDNIVTNRDLEQKVETSDQWIRERTGIEQRHIALPGQSTVDLAEQAALNAIEAAGIEATDIDLIVFATTTPDKVFPSCACILQARLGIQGCPAFDIQAVCSGFVYALATAEKFIRTGSSKKALVIGAEVFSRILNWEDRTTCVLFGDGAGAVVLEASEETGILSTHLHADGRYEELLHVPCGIANDFDAVKAGQAFVEMKGNEVFKVAVNTLGRIVDETLEANQMQKSEIDWLVPHQANLRIIAATARKLDMPMDQVVVTVNRHGNTSAASIPLALDEAVRDGRIQRGQVVLLEAFGGGFTWGSALLRY</sequence>